<keyword id="KW-0963">Cytoplasm</keyword>
<keyword id="KW-0276">Fatty acid metabolism</keyword>
<keyword id="KW-0413">Isomerase</keyword>
<keyword id="KW-0442">Lipid degradation</keyword>
<keyword id="KW-0443">Lipid metabolism</keyword>
<keyword id="KW-0456">Lyase</keyword>
<keyword id="KW-0511">Multifunctional enzyme</keyword>
<keyword id="KW-0520">NAD</keyword>
<keyword id="KW-0560">Oxidoreductase</keyword>
<reference key="1">
    <citation type="journal article" date="2008" name="Genome Res.">
        <title>Comparative genome analysis of Salmonella enteritidis PT4 and Salmonella gallinarum 287/91 provides insights into evolutionary and host adaptation pathways.</title>
        <authorList>
            <person name="Thomson N.R."/>
            <person name="Clayton D.J."/>
            <person name="Windhorst D."/>
            <person name="Vernikos G."/>
            <person name="Davidson S."/>
            <person name="Churcher C."/>
            <person name="Quail M.A."/>
            <person name="Stevens M."/>
            <person name="Jones M.A."/>
            <person name="Watson M."/>
            <person name="Barron A."/>
            <person name="Layton A."/>
            <person name="Pickard D."/>
            <person name="Kingsley R.A."/>
            <person name="Bignell A."/>
            <person name="Clark L."/>
            <person name="Harris B."/>
            <person name="Ormond D."/>
            <person name="Abdellah Z."/>
            <person name="Brooks K."/>
            <person name="Cherevach I."/>
            <person name="Chillingworth T."/>
            <person name="Woodward J."/>
            <person name="Norberczak H."/>
            <person name="Lord A."/>
            <person name="Arrowsmith C."/>
            <person name="Jagels K."/>
            <person name="Moule S."/>
            <person name="Mungall K."/>
            <person name="Saunders M."/>
            <person name="Whitehead S."/>
            <person name="Chabalgoity J.A."/>
            <person name="Maskell D."/>
            <person name="Humphreys T."/>
            <person name="Roberts M."/>
            <person name="Barrow P.A."/>
            <person name="Dougan G."/>
            <person name="Parkhill J."/>
        </authorList>
    </citation>
    <scope>NUCLEOTIDE SEQUENCE [LARGE SCALE GENOMIC DNA]</scope>
    <source>
        <strain>P125109</strain>
    </source>
</reference>
<sequence>MTTTSAFMLNVRLDNVAVVAIDVPGEKVNTLKAEFAAQVRAILKQIRENKALQGVVFISAKADNFIAGADINMIGHCQNAQEAETLARQGQQLMAEIQALPVPVIAAIHGACLGGGLEMALACHRRICTDDVKTVLGLPEVQLGLLPGSGGTQRLPRLVGVSTALDMILTGKQLRARQALKAGLVDDVVPQTILLEAAVELAKKERLAQRTLPVRERILAGPLGRALLFRLVRKKTAQKTQGNYPATERIIDVIETGLAQGSSSGYDAEARAFGELAMTPQSQALRAVFFASTEVKKDPGSDAPPGPLNSVGILGGGLMGGGIAWVTACKGGLPVRIKDINTQGINHALKYSWDLLETKVRRRHIKANERDKQLALISGSTDYRGFSHRDLVIEAVFEDLPLKQQMVAEVEQNCAAHTIFASNTSSLPIGDIAANAARPEQVIGLHFFSPVEKMPLVEVIPHASTSAQTIATTVKLAKKQGKTPIVVSDKAGFYVNRILAPYINEAIRMLTEGERVEHIDAALVKFGFPVGPIQLLDEVGIDTGTKIIPVLEAAYGERFSAPANVVASILNDDRKGRKNGRGFYLYGEKGRKSKKQVDPAIYKLIGVQGQSRLSAQQVAERCVMLMLNEAARCFDEKVIRSARDGDIGAVFGIGFPPFLGGPFRYMDALGPGEMVATLQRLAALYGPRYAPCEQLVRMAERREHFWTNGETDQGN</sequence>
<feature type="chain" id="PRO_1000185949" description="Fatty acid oxidation complex subunit alpha">
    <location>
        <begin position="1"/>
        <end position="715"/>
    </location>
</feature>
<feature type="region of interest" description="Enoyl-CoA hydratase" evidence="1">
    <location>
        <begin position="1"/>
        <end position="190"/>
    </location>
</feature>
<feature type="region of interest" description="3-hydroxyacyl-CoA dehydrogenase" evidence="1">
    <location>
        <begin position="306"/>
        <end position="715"/>
    </location>
</feature>
<feature type="site" description="Important for catalytic activity" evidence="1">
    <location>
        <position position="118"/>
    </location>
</feature>
<feature type="site" description="Important for catalytic activity" evidence="1">
    <location>
        <position position="140"/>
    </location>
</feature>
<organism>
    <name type="scientific">Salmonella enteritidis PT4 (strain P125109)</name>
    <dbReference type="NCBI Taxonomy" id="550537"/>
    <lineage>
        <taxon>Bacteria</taxon>
        <taxon>Pseudomonadati</taxon>
        <taxon>Pseudomonadota</taxon>
        <taxon>Gammaproteobacteria</taxon>
        <taxon>Enterobacterales</taxon>
        <taxon>Enterobacteriaceae</taxon>
        <taxon>Salmonella</taxon>
    </lineage>
</organism>
<evidence type="ECO:0000255" key="1">
    <source>
        <dbReference type="HAMAP-Rule" id="MF_01617"/>
    </source>
</evidence>
<protein>
    <recommendedName>
        <fullName evidence="1">Fatty acid oxidation complex subunit alpha</fullName>
    </recommendedName>
    <domain>
        <recommendedName>
            <fullName evidence="1">Enoyl-CoA hydratase/3-hydroxybutyryl-CoA epimerase</fullName>
            <ecNumber evidence="1">4.2.1.17</ecNumber>
            <ecNumber evidence="1">5.1.2.3</ecNumber>
        </recommendedName>
    </domain>
    <domain>
        <recommendedName>
            <fullName evidence="1">3-hydroxyacyl-CoA dehydrogenase</fullName>
            <ecNumber evidence="1">1.1.1.35</ecNumber>
        </recommendedName>
    </domain>
</protein>
<comment type="function">
    <text evidence="1">Catalyzes the formation of a hydroxyacyl-CoA by addition of water on enoyl-CoA. Also exhibits 3-hydroxyacyl-CoA epimerase and 3-hydroxyacyl-CoA dehydrogenase activities.</text>
</comment>
<comment type="catalytic activity">
    <reaction evidence="1">
        <text>a (3S)-3-hydroxyacyl-CoA = a (2E)-enoyl-CoA + H2O</text>
        <dbReference type="Rhea" id="RHEA:16105"/>
        <dbReference type="ChEBI" id="CHEBI:15377"/>
        <dbReference type="ChEBI" id="CHEBI:57318"/>
        <dbReference type="ChEBI" id="CHEBI:58856"/>
        <dbReference type="EC" id="4.2.1.17"/>
    </reaction>
</comment>
<comment type="catalytic activity">
    <reaction evidence="1">
        <text>a 4-saturated-(3S)-3-hydroxyacyl-CoA = a (3E)-enoyl-CoA + H2O</text>
        <dbReference type="Rhea" id="RHEA:20724"/>
        <dbReference type="ChEBI" id="CHEBI:15377"/>
        <dbReference type="ChEBI" id="CHEBI:58521"/>
        <dbReference type="ChEBI" id="CHEBI:137480"/>
        <dbReference type="EC" id="4.2.1.17"/>
    </reaction>
</comment>
<comment type="catalytic activity">
    <reaction evidence="1">
        <text>a (3S)-3-hydroxyacyl-CoA + NAD(+) = a 3-oxoacyl-CoA + NADH + H(+)</text>
        <dbReference type="Rhea" id="RHEA:22432"/>
        <dbReference type="ChEBI" id="CHEBI:15378"/>
        <dbReference type="ChEBI" id="CHEBI:57318"/>
        <dbReference type="ChEBI" id="CHEBI:57540"/>
        <dbReference type="ChEBI" id="CHEBI:57945"/>
        <dbReference type="ChEBI" id="CHEBI:90726"/>
        <dbReference type="EC" id="1.1.1.35"/>
    </reaction>
</comment>
<comment type="catalytic activity">
    <reaction evidence="1">
        <text>(3S)-3-hydroxybutanoyl-CoA = (3R)-3-hydroxybutanoyl-CoA</text>
        <dbReference type="Rhea" id="RHEA:21760"/>
        <dbReference type="ChEBI" id="CHEBI:57315"/>
        <dbReference type="ChEBI" id="CHEBI:57316"/>
        <dbReference type="EC" id="5.1.2.3"/>
    </reaction>
</comment>
<comment type="pathway">
    <text evidence="1">Lipid metabolism; fatty acid beta-oxidation.</text>
</comment>
<comment type="subunit">
    <text evidence="1">Heterotetramer of two alpha chains (FadJ) and two beta chains (FadI).</text>
</comment>
<comment type="subcellular location">
    <subcellularLocation>
        <location evidence="1">Cytoplasm</location>
    </subcellularLocation>
</comment>
<comment type="similarity">
    <text evidence="1">In the N-terminal section; belongs to the enoyl-CoA hydratase/isomerase family.</text>
</comment>
<comment type="similarity">
    <text evidence="1">In the central section; belongs to the 3-hydroxyacyl-CoA dehydrogenase family.</text>
</comment>
<dbReference type="EC" id="4.2.1.17" evidence="1"/>
<dbReference type="EC" id="5.1.2.3" evidence="1"/>
<dbReference type="EC" id="1.1.1.35" evidence="1"/>
<dbReference type="EMBL" id="AM933172">
    <property type="protein sequence ID" value="CAR33954.1"/>
    <property type="molecule type" value="Genomic_DNA"/>
</dbReference>
<dbReference type="RefSeq" id="WP_000214140.1">
    <property type="nucleotide sequence ID" value="NC_011294.1"/>
</dbReference>
<dbReference type="SMR" id="B5R3R9"/>
<dbReference type="KEGG" id="set:SEN2370"/>
<dbReference type="HOGENOM" id="CLU_009834_16_3_6"/>
<dbReference type="UniPathway" id="UPA00659"/>
<dbReference type="Proteomes" id="UP000000613">
    <property type="component" value="Chromosome"/>
</dbReference>
<dbReference type="GO" id="GO:0005737">
    <property type="term" value="C:cytoplasm"/>
    <property type="evidence" value="ECO:0007669"/>
    <property type="project" value="UniProtKB-SubCell"/>
</dbReference>
<dbReference type="GO" id="GO:0008692">
    <property type="term" value="F:3-hydroxybutyryl-CoA epimerase activity"/>
    <property type="evidence" value="ECO:0007669"/>
    <property type="project" value="UniProtKB-UniRule"/>
</dbReference>
<dbReference type="GO" id="GO:0004300">
    <property type="term" value="F:enoyl-CoA hydratase activity"/>
    <property type="evidence" value="ECO:0007669"/>
    <property type="project" value="UniProtKB-UniRule"/>
</dbReference>
<dbReference type="GO" id="GO:0016509">
    <property type="term" value="F:long-chain-3-hydroxyacyl-CoA dehydrogenase activity"/>
    <property type="evidence" value="ECO:0007669"/>
    <property type="project" value="TreeGrafter"/>
</dbReference>
<dbReference type="GO" id="GO:0070403">
    <property type="term" value="F:NAD+ binding"/>
    <property type="evidence" value="ECO:0007669"/>
    <property type="project" value="InterPro"/>
</dbReference>
<dbReference type="GO" id="GO:0006635">
    <property type="term" value="P:fatty acid beta-oxidation"/>
    <property type="evidence" value="ECO:0007669"/>
    <property type="project" value="UniProtKB-UniRule"/>
</dbReference>
<dbReference type="CDD" id="cd06558">
    <property type="entry name" value="crotonase-like"/>
    <property type="match status" value="1"/>
</dbReference>
<dbReference type="FunFam" id="1.10.1040.50:FF:000003">
    <property type="entry name" value="Fatty acid oxidation complex subunit alpha"/>
    <property type="match status" value="1"/>
</dbReference>
<dbReference type="FunFam" id="3.90.226.10:FF:000011">
    <property type="entry name" value="Fatty acid oxidation complex subunit alpha"/>
    <property type="match status" value="1"/>
</dbReference>
<dbReference type="FunFam" id="3.40.50.720:FF:000009">
    <property type="entry name" value="Fatty oxidation complex, alpha subunit"/>
    <property type="match status" value="1"/>
</dbReference>
<dbReference type="Gene3D" id="1.10.1040.50">
    <property type="match status" value="1"/>
</dbReference>
<dbReference type="Gene3D" id="3.90.226.10">
    <property type="entry name" value="2-enoyl-CoA Hydratase, Chain A, domain 1"/>
    <property type="match status" value="1"/>
</dbReference>
<dbReference type="Gene3D" id="3.40.50.720">
    <property type="entry name" value="NAD(P)-binding Rossmann-like Domain"/>
    <property type="match status" value="1"/>
</dbReference>
<dbReference type="HAMAP" id="MF_01617">
    <property type="entry name" value="FadJ"/>
    <property type="match status" value="1"/>
</dbReference>
<dbReference type="InterPro" id="IPR006180">
    <property type="entry name" value="3-OHacyl-CoA_DH_CS"/>
</dbReference>
<dbReference type="InterPro" id="IPR006176">
    <property type="entry name" value="3-OHacyl-CoA_DH_NAD-bd"/>
</dbReference>
<dbReference type="InterPro" id="IPR006108">
    <property type="entry name" value="3HC_DH_C"/>
</dbReference>
<dbReference type="InterPro" id="IPR008927">
    <property type="entry name" value="6-PGluconate_DH-like_C_sf"/>
</dbReference>
<dbReference type="InterPro" id="IPR029045">
    <property type="entry name" value="ClpP/crotonase-like_dom_sf"/>
</dbReference>
<dbReference type="InterPro" id="IPR001753">
    <property type="entry name" value="Enoyl-CoA_hydra/iso"/>
</dbReference>
<dbReference type="InterPro" id="IPR050136">
    <property type="entry name" value="FA_oxidation_alpha_subunit"/>
</dbReference>
<dbReference type="InterPro" id="IPR012802">
    <property type="entry name" value="FadJ"/>
</dbReference>
<dbReference type="InterPro" id="IPR036291">
    <property type="entry name" value="NAD(P)-bd_dom_sf"/>
</dbReference>
<dbReference type="NCBIfam" id="TIGR02440">
    <property type="entry name" value="FadJ"/>
    <property type="match status" value="1"/>
</dbReference>
<dbReference type="NCBIfam" id="NF008363">
    <property type="entry name" value="PRK11154.1"/>
    <property type="match status" value="1"/>
</dbReference>
<dbReference type="PANTHER" id="PTHR43612">
    <property type="entry name" value="TRIFUNCTIONAL ENZYME SUBUNIT ALPHA"/>
    <property type="match status" value="1"/>
</dbReference>
<dbReference type="PANTHER" id="PTHR43612:SF3">
    <property type="entry name" value="TRIFUNCTIONAL ENZYME SUBUNIT ALPHA, MITOCHONDRIAL"/>
    <property type="match status" value="1"/>
</dbReference>
<dbReference type="Pfam" id="PF00725">
    <property type="entry name" value="3HCDH"/>
    <property type="match status" value="1"/>
</dbReference>
<dbReference type="Pfam" id="PF02737">
    <property type="entry name" value="3HCDH_N"/>
    <property type="match status" value="1"/>
</dbReference>
<dbReference type="Pfam" id="PF00378">
    <property type="entry name" value="ECH_1"/>
    <property type="match status" value="1"/>
</dbReference>
<dbReference type="SUPFAM" id="SSF48179">
    <property type="entry name" value="6-phosphogluconate dehydrogenase C-terminal domain-like"/>
    <property type="match status" value="2"/>
</dbReference>
<dbReference type="SUPFAM" id="SSF52096">
    <property type="entry name" value="ClpP/crotonase"/>
    <property type="match status" value="1"/>
</dbReference>
<dbReference type="SUPFAM" id="SSF51735">
    <property type="entry name" value="NAD(P)-binding Rossmann-fold domains"/>
    <property type="match status" value="1"/>
</dbReference>
<dbReference type="PROSITE" id="PS00067">
    <property type="entry name" value="3HCDH"/>
    <property type="match status" value="1"/>
</dbReference>
<accession>B5R3R9</accession>
<gene>
    <name evidence="1" type="primary">fadJ</name>
    <name type="ordered locus">SEN2370</name>
</gene>
<proteinExistence type="inferred from homology"/>
<name>FADJ_SALEP</name>